<sequence>MESTTSSPQPPPSDALEAFPQKSMEPADIVVLVLYFLFVLAVGLWSTVRTKRDTVKGYFLAGGDMVWWPVGASLFASNVGSGHFIGLAGSGAAVGISVAAYELNGLFSVLMLAWIFLPIYIAGQVTTMPEYLKRRFGGSRIPITLASIYPSTHSLTILQVDMYAGAIFIQQSLHLDLYLAIVGLLAVTALYTVAGGLAAVIYTDALQTVIMLIGAFILMGYSFAAVGGMEGLKDQYFLALASNRSENSSCGLPREDAFHIFRDPLTSDLPWPGILFGMSIPSLWYWCTDQVIVQRSLAAKNLSHAKGGSLMAAYLKVLPLFLMVFPGMVSRILFPDQVACAHPDICQRVCSNPSGCSDIAYPKLVLELLPTGLRGLMMAVMVAALMSSLTSIFNSASTIFTMDLWHHIRPRASERELMIVGRVFVLALVLVSILWIPVVQASQGGQLFIYIQSISSYLQPPVAVVFIMGCFWKRTNEKGAFSGLILGLLLGLVRLILDFVYVQPRCDQPDDRPAVVKDVHYLYFSMILSSTTLITVFTVSWFTETPSKEMVSRLTWFTRHEPVAQKDSVPPENPLSLTISQNGTTEATGISIQLESVQEATTKAHSDGVSPKQSKVLKAILWLCGMEKDKEEPPSKVEPVIVSLEENPLVKTLLDVNCIVCISCAIFLWGYFA</sequence>
<gene>
    <name evidence="9" type="primary">Slc5a11</name>
    <name evidence="9" type="synonym">Kst1</name>
    <name evidence="6" type="synonym">Smit2</name>
</gene>
<name>SC5AB_RAT</name>
<protein>
    <recommendedName>
        <fullName>Sodium/myo-inositol cotransporter 2</fullName>
        <shortName>Na(+)/myo-inositol cotransporter 2</shortName>
    </recommendedName>
    <alternativeName>
        <fullName>Sodium-dependent glucose cotransporter</fullName>
    </alternativeName>
    <alternativeName>
        <fullName>Sodium/glucose cotransporter KST1</fullName>
        <shortName>rkST1</shortName>
    </alternativeName>
    <alternativeName>
        <fullName>Sodium/myo-inositol transporter 2</fullName>
        <shortName>SMIT2</shortName>
    </alternativeName>
    <alternativeName>
        <fullName>Solute carrier family 5 member 11</fullName>
    </alternativeName>
</protein>
<accession>Q9Z1F2</accession>
<organism>
    <name type="scientific">Rattus norvegicus</name>
    <name type="common">Rat</name>
    <dbReference type="NCBI Taxonomy" id="10116"/>
    <lineage>
        <taxon>Eukaryota</taxon>
        <taxon>Metazoa</taxon>
        <taxon>Chordata</taxon>
        <taxon>Craniata</taxon>
        <taxon>Vertebrata</taxon>
        <taxon>Euteleostomi</taxon>
        <taxon>Mammalia</taxon>
        <taxon>Eutheria</taxon>
        <taxon>Euarchontoglires</taxon>
        <taxon>Glires</taxon>
        <taxon>Rodentia</taxon>
        <taxon>Myomorpha</taxon>
        <taxon>Muroidea</taxon>
        <taxon>Muridae</taxon>
        <taxon>Murinae</taxon>
        <taxon>Rattus</taxon>
    </lineage>
</organism>
<evidence type="ECO:0000250" key="1">
    <source>
        <dbReference type="UniProtKB" id="Q28728"/>
    </source>
</evidence>
<evidence type="ECO:0000250" key="2">
    <source>
        <dbReference type="UniProtKB" id="Q8WWX8"/>
    </source>
</evidence>
<evidence type="ECO:0000255" key="3"/>
<evidence type="ECO:0000269" key="4">
    <source>
    </source>
</evidence>
<evidence type="ECO:0000269" key="5">
    <source>
    </source>
</evidence>
<evidence type="ECO:0000303" key="6">
    <source>
    </source>
</evidence>
<evidence type="ECO:0000305" key="7"/>
<evidence type="ECO:0000312" key="8">
    <source>
        <dbReference type="EMBL" id="AAD10832.1"/>
    </source>
</evidence>
<evidence type="ECO:0000312" key="9">
    <source>
        <dbReference type="RGD" id="621410"/>
    </source>
</evidence>
<comment type="function">
    <text evidence="1 2 5">Involved in the sodium-dependent cotransport of myo-inositol (MI) with a Na(+):MI stoichiometry of 2:1. Exclusively responsible for apical MI transport and absorption in intestine (PubMed:17932225). Can also transport D-chiro-inositol (DCI) but not L-fucose. Exhibits stereospecific cotransport of both D-glucose and D-xylose. May induce apoptosis through the TNF-alpha, PDCD1 pathway. May play a role in the regulation of MI concentration in serum, involving reabsorption in at least the proximal tubule of the kidney (By similarity).</text>
</comment>
<comment type="catalytic activity">
    <reaction evidence="5">
        <text>myo-inositol(out) + 2 Na(+)(out) = myo-inositol(in) + 2 Na(+)(in)</text>
        <dbReference type="Rhea" id="RHEA:72987"/>
        <dbReference type="ChEBI" id="CHEBI:17268"/>
        <dbReference type="ChEBI" id="CHEBI:29101"/>
    </reaction>
</comment>
<comment type="catalytic activity">
    <reaction evidence="5">
        <text>1D-chiro-inositol(out) + 2 Na(+)(out) = 1D-chiro-inositol(in) + 2 Na(+)(in)</text>
        <dbReference type="Rhea" id="RHEA:73315"/>
        <dbReference type="ChEBI" id="CHEBI:27372"/>
        <dbReference type="ChEBI" id="CHEBI:29101"/>
    </reaction>
</comment>
<comment type="catalytic activity">
    <reaction evidence="1">
        <text>D-glucose(out) + 2 Na(+)(out) = D-glucose(in) + 2 Na(+)(in)</text>
        <dbReference type="Rhea" id="RHEA:70495"/>
        <dbReference type="ChEBI" id="CHEBI:4167"/>
        <dbReference type="ChEBI" id="CHEBI:29101"/>
    </reaction>
</comment>
<comment type="catalytic activity">
    <reaction evidence="1">
        <text>D-xylose(out) + 2 Na(+)(out) = D-xylose(in) + 2 Na(+)(in)</text>
        <dbReference type="Rhea" id="RHEA:73367"/>
        <dbReference type="ChEBI" id="CHEBI:29101"/>
        <dbReference type="ChEBI" id="CHEBI:53455"/>
    </reaction>
</comment>
<comment type="activity regulation">
    <text evidence="2 5">MI transport activity inhibited by D-chiro-inositol (DCI), phlorizin (Pz) and sodium (Na(+)) (PubMed:17932225). Insulin increases D-chiro-inositol uptake (By similarity).</text>
</comment>
<comment type="biophysicochemical properties">
    <kinetics>
        <KM evidence="5">150 uM for MI (in rat brush border membrane vesicles (BBMv))</KM>
        <KM evidence="5">270 uM for MI (in Xenopus laevis oocytes)</KM>
        <KM evidence="5">146 uM for DCI (in rat BBMv)</KM>
        <KM evidence="5">310 uM for DCI (in Xenopus laevis oocytes)</KM>
        <KM evidence="5">930 uM for glucose (in rat BBMv)</KM>
        <KM evidence="5">35500 uM for glucose (in Xenopus laevis oocytes)</KM>
        <KM evidence="5">15 uM for Pz (in rat BBMv)</KM>
        <KM evidence="5">16 uM for Pz (in Xenopus laevis oocytes)</KM>
    </kinetics>
</comment>
<comment type="subcellular location">
    <subcellularLocation>
        <location evidence="5">Membrane</location>
        <topology evidence="5">Multi-pass membrane protein</topology>
    </subcellularLocation>
    <subcellularLocation>
        <location evidence="5">Apical cell membrane</location>
        <topology evidence="5">Multi-pass membrane protein</topology>
    </subcellularLocation>
    <text evidence="1 5">Located on apical membrane of enterocytes. Located on membrane of kidney brush border membrane vesicles (BBMVs) and apical membrane of proximal convoluted tubules (By similarity).</text>
</comment>
<comment type="tissue specificity">
    <text evidence="5">Expressed in kidney and small intestine.</text>
</comment>
<comment type="similarity">
    <text evidence="3">Belongs to the sodium:solute symporter (SSF) (TC 2.A.21) family.</text>
</comment>
<dbReference type="EMBL" id="AABR03003549">
    <property type="status" value="NOT_ANNOTATED_CDS"/>
    <property type="molecule type" value="Genomic_DNA"/>
</dbReference>
<dbReference type="EMBL" id="AABR03010317">
    <property type="status" value="NOT_ANNOTATED_CDS"/>
    <property type="molecule type" value="Genomic_DNA"/>
</dbReference>
<dbReference type="EMBL" id="AABR03003744">
    <property type="status" value="NOT_ANNOTATED_CDS"/>
    <property type="molecule type" value="Genomic_DNA"/>
</dbReference>
<dbReference type="EMBL" id="AABR03007524">
    <property type="status" value="NOT_ANNOTATED_CDS"/>
    <property type="molecule type" value="Genomic_DNA"/>
</dbReference>
<dbReference type="EMBL" id="U47673">
    <property type="protein sequence ID" value="AAD10832.1"/>
    <property type="molecule type" value="mRNA"/>
</dbReference>
<dbReference type="RefSeq" id="NP_001093952.2">
    <property type="nucleotide sequence ID" value="NM_001100482.2"/>
</dbReference>
<dbReference type="SMR" id="Q9Z1F2"/>
<dbReference type="FunCoup" id="Q9Z1F2">
    <property type="interactions" value="7"/>
</dbReference>
<dbReference type="STRING" id="10116.ENSRNOP00000073553"/>
<dbReference type="PhosphoSitePlus" id="Q9Z1F2"/>
<dbReference type="PaxDb" id="10116-ENSRNOP00000060635"/>
<dbReference type="GeneID" id="252854"/>
<dbReference type="KEGG" id="rno:252854"/>
<dbReference type="UCSC" id="RGD:621410">
    <property type="organism name" value="rat"/>
</dbReference>
<dbReference type="AGR" id="RGD:621410"/>
<dbReference type="CTD" id="115584"/>
<dbReference type="RGD" id="621410">
    <property type="gene designation" value="Slc5a11"/>
</dbReference>
<dbReference type="eggNOG" id="KOG2349">
    <property type="taxonomic scope" value="Eukaryota"/>
</dbReference>
<dbReference type="InParanoid" id="Q9Z1F2"/>
<dbReference type="PhylomeDB" id="Q9Z1F2"/>
<dbReference type="Reactome" id="R-RNO-429593">
    <property type="pathway name" value="Inositol transporters"/>
</dbReference>
<dbReference type="PRO" id="PR:Q9Z1F2"/>
<dbReference type="Proteomes" id="UP000002494">
    <property type="component" value="Unplaced"/>
</dbReference>
<dbReference type="GO" id="GO:0016324">
    <property type="term" value="C:apical plasma membrane"/>
    <property type="evidence" value="ECO:0007669"/>
    <property type="project" value="UniProtKB-SubCell"/>
</dbReference>
<dbReference type="GO" id="GO:0005886">
    <property type="term" value="C:plasma membrane"/>
    <property type="evidence" value="ECO:0000314"/>
    <property type="project" value="UniProtKB"/>
</dbReference>
<dbReference type="GO" id="GO:0005412">
    <property type="term" value="F:D-glucose:sodium symporter activity"/>
    <property type="evidence" value="ECO:0000318"/>
    <property type="project" value="GO_Central"/>
</dbReference>
<dbReference type="GO" id="GO:0005365">
    <property type="term" value="F:myo-inositol transmembrane transporter activity"/>
    <property type="evidence" value="ECO:0000314"/>
    <property type="project" value="UniProtKB"/>
</dbReference>
<dbReference type="GO" id="GO:0006915">
    <property type="term" value="P:apoptotic process"/>
    <property type="evidence" value="ECO:0007669"/>
    <property type="project" value="UniProtKB-KW"/>
</dbReference>
<dbReference type="GO" id="GO:0015798">
    <property type="term" value="P:myo-inositol transport"/>
    <property type="evidence" value="ECO:0000314"/>
    <property type="project" value="UniProtKB"/>
</dbReference>
<dbReference type="FunFam" id="1.20.1730.10:FF:000012">
    <property type="entry name" value="sodium/myo-inositol cotransporter 2 isoform X1"/>
    <property type="match status" value="1"/>
</dbReference>
<dbReference type="Gene3D" id="1.20.1730.10">
    <property type="entry name" value="Sodium/glucose cotransporter"/>
    <property type="match status" value="1"/>
</dbReference>
<dbReference type="InterPro" id="IPR038377">
    <property type="entry name" value="Na/Glc_symporter_sf"/>
</dbReference>
<dbReference type="InterPro" id="IPR001734">
    <property type="entry name" value="Na/solute_symporter"/>
</dbReference>
<dbReference type="NCBIfam" id="TIGR00813">
    <property type="entry name" value="sss"/>
    <property type="match status" value="1"/>
</dbReference>
<dbReference type="PANTHER" id="PTHR11819:SF171">
    <property type="entry name" value="SODIUM_MYO-INOSITOL COTRANSPORTER 2"/>
    <property type="match status" value="1"/>
</dbReference>
<dbReference type="PANTHER" id="PTHR11819">
    <property type="entry name" value="SOLUTE CARRIER FAMILY 5"/>
    <property type="match status" value="1"/>
</dbReference>
<dbReference type="Pfam" id="PF00474">
    <property type="entry name" value="SSF"/>
    <property type="match status" value="1"/>
</dbReference>
<dbReference type="PROSITE" id="PS50283">
    <property type="entry name" value="NA_SOLUT_SYMP_3"/>
    <property type="match status" value="1"/>
</dbReference>
<keyword id="KW-0053">Apoptosis</keyword>
<keyword id="KW-1003">Cell membrane</keyword>
<keyword id="KW-0406">Ion transport</keyword>
<keyword id="KW-0472">Membrane</keyword>
<keyword id="KW-1185">Reference proteome</keyword>
<keyword id="KW-0915">Sodium</keyword>
<keyword id="KW-0739">Sodium transport</keyword>
<keyword id="KW-0762">Sugar transport</keyword>
<keyword id="KW-0769">Symport</keyword>
<keyword id="KW-0812">Transmembrane</keyword>
<keyword id="KW-1133">Transmembrane helix</keyword>
<keyword id="KW-0813">Transport</keyword>
<reference evidence="7" key="1">
    <citation type="journal article" date="2004" name="Nature">
        <title>Genome sequence of the Brown Norway rat yields insights into mammalian evolution.</title>
        <authorList>
            <person name="Gibbs R.A."/>
            <person name="Weinstock G.M."/>
            <person name="Metzker M.L."/>
            <person name="Muzny D.M."/>
            <person name="Sodergren E.J."/>
            <person name="Scherer S."/>
            <person name="Scott G."/>
            <person name="Steffen D."/>
            <person name="Worley K.C."/>
            <person name="Burch P.E."/>
            <person name="Okwuonu G."/>
            <person name="Hines S."/>
            <person name="Lewis L."/>
            <person name="Deramo C."/>
            <person name="Delgado O."/>
            <person name="Dugan-Rocha S."/>
            <person name="Miner G."/>
            <person name="Morgan M."/>
            <person name="Hawes A."/>
            <person name="Gill R."/>
            <person name="Holt R.A."/>
            <person name="Adams M.D."/>
            <person name="Amanatides P.G."/>
            <person name="Baden-Tillson H."/>
            <person name="Barnstead M."/>
            <person name="Chin S."/>
            <person name="Evans C.A."/>
            <person name="Ferriera S."/>
            <person name="Fosler C."/>
            <person name="Glodek A."/>
            <person name="Gu Z."/>
            <person name="Jennings D."/>
            <person name="Kraft C.L."/>
            <person name="Nguyen T."/>
            <person name="Pfannkoch C.M."/>
            <person name="Sitter C."/>
            <person name="Sutton G.G."/>
            <person name="Venter J.C."/>
            <person name="Woodage T."/>
            <person name="Smith D."/>
            <person name="Lee H.-M."/>
            <person name="Gustafson E."/>
            <person name="Cahill P."/>
            <person name="Kana A."/>
            <person name="Doucette-Stamm L."/>
            <person name="Weinstock K."/>
            <person name="Fechtel K."/>
            <person name="Weiss R.B."/>
            <person name="Dunn D.M."/>
            <person name="Green E.D."/>
            <person name="Blakesley R.W."/>
            <person name="Bouffard G.G."/>
            <person name="De Jong P.J."/>
            <person name="Osoegawa K."/>
            <person name="Zhu B."/>
            <person name="Marra M."/>
            <person name="Schein J."/>
            <person name="Bosdet I."/>
            <person name="Fjell C."/>
            <person name="Jones S."/>
            <person name="Krzywinski M."/>
            <person name="Mathewson C."/>
            <person name="Siddiqui A."/>
            <person name="Wye N."/>
            <person name="McPherson J."/>
            <person name="Zhao S."/>
            <person name="Fraser C.M."/>
            <person name="Shetty J."/>
            <person name="Shatsman S."/>
            <person name="Geer K."/>
            <person name="Chen Y."/>
            <person name="Abramzon S."/>
            <person name="Nierman W.C."/>
            <person name="Havlak P.H."/>
            <person name="Chen R."/>
            <person name="Durbin K.J."/>
            <person name="Egan A."/>
            <person name="Ren Y."/>
            <person name="Song X.-Z."/>
            <person name="Li B."/>
            <person name="Liu Y."/>
            <person name="Qin X."/>
            <person name="Cawley S."/>
            <person name="Cooney A.J."/>
            <person name="D'Souza L.M."/>
            <person name="Martin K."/>
            <person name="Wu J.Q."/>
            <person name="Gonzalez-Garay M.L."/>
            <person name="Jackson A.R."/>
            <person name="Kalafus K.J."/>
            <person name="McLeod M.P."/>
            <person name="Milosavljevic A."/>
            <person name="Virk D."/>
            <person name="Volkov A."/>
            <person name="Wheeler D.A."/>
            <person name="Zhang Z."/>
            <person name="Bailey J.A."/>
            <person name="Eichler E.E."/>
            <person name="Tuzun E."/>
            <person name="Birney E."/>
            <person name="Mongin E."/>
            <person name="Ureta-Vidal A."/>
            <person name="Woodwark C."/>
            <person name="Zdobnov E."/>
            <person name="Bork P."/>
            <person name="Suyama M."/>
            <person name="Torrents D."/>
            <person name="Alexandersson M."/>
            <person name="Trask B.J."/>
            <person name="Young J.M."/>
            <person name="Huang H."/>
            <person name="Wang H."/>
            <person name="Xing H."/>
            <person name="Daniels S."/>
            <person name="Gietzen D."/>
            <person name="Schmidt J."/>
            <person name="Stevens K."/>
            <person name="Vitt U."/>
            <person name="Wingrove J."/>
            <person name="Camara F."/>
            <person name="Mar Alba M."/>
            <person name="Abril J.F."/>
            <person name="Guigo R."/>
            <person name="Smit A."/>
            <person name="Dubchak I."/>
            <person name="Rubin E.M."/>
            <person name="Couronne O."/>
            <person name="Poliakov A."/>
            <person name="Huebner N."/>
            <person name="Ganten D."/>
            <person name="Goesele C."/>
            <person name="Hummel O."/>
            <person name="Kreitler T."/>
            <person name="Lee Y.-A."/>
            <person name="Monti J."/>
            <person name="Schulz H."/>
            <person name="Zimdahl H."/>
            <person name="Himmelbauer H."/>
            <person name="Lehrach H."/>
            <person name="Jacob H.J."/>
            <person name="Bromberg S."/>
            <person name="Gullings-Handley J."/>
            <person name="Jensen-Seaman M.I."/>
            <person name="Kwitek A.E."/>
            <person name="Lazar J."/>
            <person name="Pasko D."/>
            <person name="Tonellato P.J."/>
            <person name="Twigger S."/>
            <person name="Ponting C.P."/>
            <person name="Duarte J.M."/>
            <person name="Rice S."/>
            <person name="Goodstadt L."/>
            <person name="Beatson S.A."/>
            <person name="Emes R.D."/>
            <person name="Winter E.E."/>
            <person name="Webber C."/>
            <person name="Brandt P."/>
            <person name="Nyakatura G."/>
            <person name="Adetobi M."/>
            <person name="Chiaromonte F."/>
            <person name="Elnitski L."/>
            <person name="Eswara P."/>
            <person name="Hardison R.C."/>
            <person name="Hou M."/>
            <person name="Kolbe D."/>
            <person name="Makova K."/>
            <person name="Miller W."/>
            <person name="Nekrutenko A."/>
            <person name="Riemer C."/>
            <person name="Schwartz S."/>
            <person name="Taylor J."/>
            <person name="Yang S."/>
            <person name="Zhang Y."/>
            <person name="Lindpaintner K."/>
            <person name="Andrews T.D."/>
            <person name="Caccamo M."/>
            <person name="Clamp M."/>
            <person name="Clarke L."/>
            <person name="Curwen V."/>
            <person name="Durbin R.M."/>
            <person name="Eyras E."/>
            <person name="Searle S.M."/>
            <person name="Cooper G.M."/>
            <person name="Batzoglou S."/>
            <person name="Brudno M."/>
            <person name="Sidow A."/>
            <person name="Stone E.A."/>
            <person name="Payseur B.A."/>
            <person name="Bourque G."/>
            <person name="Lopez-Otin C."/>
            <person name="Puente X.S."/>
            <person name="Chakrabarti K."/>
            <person name="Chatterji S."/>
            <person name="Dewey C."/>
            <person name="Pachter L."/>
            <person name="Bray N."/>
            <person name="Yap V.B."/>
            <person name="Caspi A."/>
            <person name="Tesler G."/>
            <person name="Pevzner P.A."/>
            <person name="Haussler D."/>
            <person name="Roskin K.M."/>
            <person name="Baertsch R."/>
            <person name="Clawson H."/>
            <person name="Furey T.S."/>
            <person name="Hinrichs A.S."/>
            <person name="Karolchik D."/>
            <person name="Kent W.J."/>
            <person name="Rosenbloom K.R."/>
            <person name="Trumbower H."/>
            <person name="Weirauch M."/>
            <person name="Cooper D.N."/>
            <person name="Stenson P.D."/>
            <person name="Ma B."/>
            <person name="Brent M."/>
            <person name="Arumugam M."/>
            <person name="Shteynberg D."/>
            <person name="Copley R.R."/>
            <person name="Taylor M.S."/>
            <person name="Riethman H."/>
            <person name="Mudunuri U."/>
            <person name="Peterson J."/>
            <person name="Guyer M."/>
            <person name="Felsenfeld A."/>
            <person name="Old S."/>
            <person name="Mockrin S."/>
            <person name="Collins F.S."/>
        </authorList>
    </citation>
    <scope>NUCLEOTIDE SEQUENCE [LARGE SCALE GENOMIC DNA]</scope>
    <source>
        <strain evidence="4">Brown Norway</strain>
    </source>
</reference>
<reference evidence="7 8" key="2">
    <citation type="submission" date="1996-01" db="EMBL/GenBank/DDBJ databases">
        <authorList>
            <person name="Poppe R."/>
            <person name="Gambaryan S."/>
            <person name="Wiesinger H."/>
            <person name="Haase W."/>
            <person name="Karbach U."/>
            <person name="Koepsell H."/>
        </authorList>
    </citation>
    <scope>NUCLEOTIDE SEQUENCE [MRNA] OF 71-219</scope>
    <source>
        <tissue evidence="8">Neuron</tissue>
    </source>
</reference>
<reference evidence="7" key="3">
    <citation type="journal article" date="2007" name="Am. J. Physiol.">
        <title>SMIT2 mediates all myo-inositol uptake in apical membranes of rat small intestine.</title>
        <authorList>
            <person name="Aouameur R."/>
            <person name="Da Cal S."/>
            <person name="Bissonnette P."/>
            <person name="Coady M.J."/>
            <person name="Lapointe J.-Y."/>
        </authorList>
    </citation>
    <scope>FUNCTION</scope>
    <scope>ACTIVITY REGULATION</scope>
    <scope>BIOPHYSICOCHEMICAL PROPERTIES</scope>
    <scope>SUBCELLULAR LOCATION</scope>
    <scope>TISSUE SPECIFICITY</scope>
    <scope>TRANSPORTER ACTIVITY</scope>
</reference>
<feature type="chain" id="PRO_0000331570" description="Sodium/myo-inositol cotransporter 2">
    <location>
        <begin position="1"/>
        <end position="673"/>
    </location>
</feature>
<feature type="topological domain" description="Extracellular" evidence="3">
    <location>
        <begin position="1"/>
        <end position="27"/>
    </location>
</feature>
<feature type="transmembrane region" description="Helical" evidence="3">
    <location>
        <begin position="28"/>
        <end position="48"/>
    </location>
</feature>
<feature type="topological domain" description="Cytoplasmic" evidence="3">
    <location>
        <begin position="49"/>
        <end position="56"/>
    </location>
</feature>
<feature type="transmembrane region" description="Helical" evidence="3">
    <location>
        <begin position="57"/>
        <end position="77"/>
    </location>
</feature>
<feature type="topological domain" description="Extracellular" evidence="3">
    <location>
        <position position="78"/>
    </location>
</feature>
<feature type="transmembrane region" description="Helical" evidence="3">
    <location>
        <begin position="79"/>
        <end position="99"/>
    </location>
</feature>
<feature type="topological domain" description="Cytoplasmic" evidence="3">
    <location>
        <begin position="100"/>
        <end position="102"/>
    </location>
</feature>
<feature type="transmembrane region" description="Helical" evidence="3">
    <location>
        <begin position="103"/>
        <end position="123"/>
    </location>
</feature>
<feature type="topological domain" description="Extracellular" evidence="3">
    <location>
        <begin position="124"/>
        <end position="180"/>
    </location>
</feature>
<feature type="transmembrane region" description="Helical" evidence="3">
    <location>
        <begin position="181"/>
        <end position="201"/>
    </location>
</feature>
<feature type="topological domain" description="Cytoplasmic" evidence="3">
    <location>
        <begin position="202"/>
        <end position="208"/>
    </location>
</feature>
<feature type="transmembrane region" description="Helical" evidence="3">
    <location>
        <begin position="209"/>
        <end position="229"/>
    </location>
</feature>
<feature type="topological domain" description="Extracellular" evidence="3">
    <location>
        <begin position="230"/>
        <end position="272"/>
    </location>
</feature>
<feature type="transmembrane region" description="Helical" evidence="3">
    <location>
        <begin position="273"/>
        <end position="293"/>
    </location>
</feature>
<feature type="topological domain" description="Cytoplasmic" evidence="3">
    <location>
        <begin position="294"/>
        <end position="308"/>
    </location>
</feature>
<feature type="transmembrane region" description="Helical" evidence="3">
    <location>
        <begin position="309"/>
        <end position="329"/>
    </location>
</feature>
<feature type="topological domain" description="Extracellular" evidence="3">
    <location>
        <begin position="330"/>
        <end position="375"/>
    </location>
</feature>
<feature type="transmembrane region" description="Helical" evidence="3">
    <location>
        <begin position="376"/>
        <end position="396"/>
    </location>
</feature>
<feature type="topological domain" description="Cytoplasmic" evidence="3">
    <location>
        <begin position="397"/>
        <end position="418"/>
    </location>
</feature>
<feature type="transmembrane region" description="Helical" evidence="3">
    <location>
        <begin position="419"/>
        <end position="439"/>
    </location>
</feature>
<feature type="topological domain" description="Extracellular" evidence="3">
    <location>
        <begin position="440"/>
        <end position="446"/>
    </location>
</feature>
<feature type="transmembrane region" description="Helical" evidence="3">
    <location>
        <begin position="447"/>
        <end position="467"/>
    </location>
</feature>
<feature type="topological domain" description="Cytoplasmic" evidence="3">
    <location>
        <begin position="468"/>
        <end position="479"/>
    </location>
</feature>
<feature type="transmembrane region" description="Helical" evidence="3">
    <location>
        <begin position="480"/>
        <end position="500"/>
    </location>
</feature>
<feature type="topological domain" description="Extracellular" evidence="3">
    <location>
        <begin position="501"/>
        <end position="521"/>
    </location>
</feature>
<feature type="transmembrane region" description="Helical" evidence="3">
    <location>
        <begin position="522"/>
        <end position="542"/>
    </location>
</feature>
<feature type="topological domain" description="Cytoplasmic" evidence="3">
    <location>
        <begin position="543"/>
        <end position="652"/>
    </location>
</feature>
<feature type="transmembrane region" description="Helical" evidence="3">
    <location>
        <begin position="653"/>
        <end position="673"/>
    </location>
</feature>
<feature type="sequence conflict" description="In Ref. 2; AAD10832." evidence="7" ref="2">
    <original>K</original>
    <variation>R</variation>
    <location>
        <position position="133"/>
    </location>
</feature>
<feature type="sequence conflict" description="In Ref. 2; AAD10832." evidence="7" ref="2">
    <original>P</original>
    <variation>A</variation>
    <location>
        <position position="142"/>
    </location>
</feature>
<feature type="sequence conflict" description="In Ref. 2; AAD10832." evidence="7" ref="2">
    <original>SIYPSTHSLTILQ</original>
    <variation>VLYLFIYIFTKIS</variation>
    <location>
        <begin position="147"/>
        <end position="159"/>
    </location>
</feature>
<feature type="sequence conflict" description="In Ref. 2; AAD10832." evidence="7" ref="2">
    <original>A</original>
    <variation>G</variation>
    <location>
        <position position="166"/>
    </location>
</feature>
<proteinExistence type="evidence at protein level"/>